<comment type="function">
    <text evidence="1">Catalyzes a salvage reaction resulting in the formation of AMP, that is energically less costly than de novo synthesis.</text>
</comment>
<comment type="catalytic activity">
    <reaction evidence="1">
        <text>AMP + diphosphate = 5-phospho-alpha-D-ribose 1-diphosphate + adenine</text>
        <dbReference type="Rhea" id="RHEA:16609"/>
        <dbReference type="ChEBI" id="CHEBI:16708"/>
        <dbReference type="ChEBI" id="CHEBI:33019"/>
        <dbReference type="ChEBI" id="CHEBI:58017"/>
        <dbReference type="ChEBI" id="CHEBI:456215"/>
        <dbReference type="EC" id="2.4.2.7"/>
    </reaction>
</comment>
<comment type="pathway">
    <text evidence="1">Purine metabolism; AMP biosynthesis via salvage pathway; AMP from adenine: step 1/1.</text>
</comment>
<comment type="subunit">
    <text evidence="1">Homodimer.</text>
</comment>
<comment type="subcellular location">
    <subcellularLocation>
        <location evidence="1">Cytoplasm</location>
    </subcellularLocation>
</comment>
<comment type="similarity">
    <text evidence="1">Belongs to the purine/pyrimidine phosphoribosyltransferase family.</text>
</comment>
<organism>
    <name type="scientific">Escherichia coli O81 (strain ED1a)</name>
    <dbReference type="NCBI Taxonomy" id="585397"/>
    <lineage>
        <taxon>Bacteria</taxon>
        <taxon>Pseudomonadati</taxon>
        <taxon>Pseudomonadota</taxon>
        <taxon>Gammaproteobacteria</taxon>
        <taxon>Enterobacterales</taxon>
        <taxon>Enterobacteriaceae</taxon>
        <taxon>Escherichia</taxon>
    </lineage>
</organism>
<evidence type="ECO:0000255" key="1">
    <source>
        <dbReference type="HAMAP-Rule" id="MF_00004"/>
    </source>
</evidence>
<name>APT_ECO81</name>
<gene>
    <name evidence="1" type="primary">apt</name>
    <name type="ordered locus">ECED1_0492</name>
</gene>
<keyword id="KW-0963">Cytoplasm</keyword>
<keyword id="KW-0328">Glycosyltransferase</keyword>
<keyword id="KW-0660">Purine salvage</keyword>
<keyword id="KW-0808">Transferase</keyword>
<protein>
    <recommendedName>
        <fullName evidence="1">Adenine phosphoribosyltransferase</fullName>
        <shortName evidence="1">APRT</shortName>
        <ecNumber evidence="1">2.4.2.7</ecNumber>
    </recommendedName>
</protein>
<accession>B7MQI4</accession>
<dbReference type="EC" id="2.4.2.7" evidence="1"/>
<dbReference type="EMBL" id="CU928162">
    <property type="protein sequence ID" value="CAR06702.1"/>
    <property type="molecule type" value="Genomic_DNA"/>
</dbReference>
<dbReference type="RefSeq" id="WP_000127356.1">
    <property type="nucleotide sequence ID" value="NC_011745.1"/>
</dbReference>
<dbReference type="SMR" id="B7MQI4"/>
<dbReference type="GeneID" id="93776981"/>
<dbReference type="KEGG" id="ecq:ECED1_0492"/>
<dbReference type="HOGENOM" id="CLU_063339_3_0_6"/>
<dbReference type="UniPathway" id="UPA00588">
    <property type="reaction ID" value="UER00646"/>
</dbReference>
<dbReference type="Proteomes" id="UP000000748">
    <property type="component" value="Chromosome"/>
</dbReference>
<dbReference type="GO" id="GO:0005737">
    <property type="term" value="C:cytoplasm"/>
    <property type="evidence" value="ECO:0007669"/>
    <property type="project" value="UniProtKB-SubCell"/>
</dbReference>
<dbReference type="GO" id="GO:0002055">
    <property type="term" value="F:adenine binding"/>
    <property type="evidence" value="ECO:0007669"/>
    <property type="project" value="TreeGrafter"/>
</dbReference>
<dbReference type="GO" id="GO:0003999">
    <property type="term" value="F:adenine phosphoribosyltransferase activity"/>
    <property type="evidence" value="ECO:0007669"/>
    <property type="project" value="UniProtKB-UniRule"/>
</dbReference>
<dbReference type="GO" id="GO:0016208">
    <property type="term" value="F:AMP binding"/>
    <property type="evidence" value="ECO:0007669"/>
    <property type="project" value="TreeGrafter"/>
</dbReference>
<dbReference type="GO" id="GO:0006168">
    <property type="term" value="P:adenine salvage"/>
    <property type="evidence" value="ECO:0007669"/>
    <property type="project" value="InterPro"/>
</dbReference>
<dbReference type="GO" id="GO:0044209">
    <property type="term" value="P:AMP salvage"/>
    <property type="evidence" value="ECO:0007669"/>
    <property type="project" value="UniProtKB-UniRule"/>
</dbReference>
<dbReference type="GO" id="GO:0006166">
    <property type="term" value="P:purine ribonucleoside salvage"/>
    <property type="evidence" value="ECO:0007669"/>
    <property type="project" value="UniProtKB-KW"/>
</dbReference>
<dbReference type="CDD" id="cd06223">
    <property type="entry name" value="PRTases_typeI"/>
    <property type="match status" value="1"/>
</dbReference>
<dbReference type="FunFam" id="3.40.50.2020:FF:000004">
    <property type="entry name" value="Adenine phosphoribosyltransferase"/>
    <property type="match status" value="1"/>
</dbReference>
<dbReference type="Gene3D" id="3.40.50.2020">
    <property type="match status" value="1"/>
</dbReference>
<dbReference type="HAMAP" id="MF_00004">
    <property type="entry name" value="Aden_phosphoribosyltr"/>
    <property type="match status" value="1"/>
</dbReference>
<dbReference type="InterPro" id="IPR005764">
    <property type="entry name" value="Ade_phspho_trans"/>
</dbReference>
<dbReference type="InterPro" id="IPR000836">
    <property type="entry name" value="PRibTrfase_dom"/>
</dbReference>
<dbReference type="InterPro" id="IPR029057">
    <property type="entry name" value="PRTase-like"/>
</dbReference>
<dbReference type="InterPro" id="IPR050054">
    <property type="entry name" value="UPRTase/APRTase"/>
</dbReference>
<dbReference type="NCBIfam" id="TIGR01090">
    <property type="entry name" value="apt"/>
    <property type="match status" value="1"/>
</dbReference>
<dbReference type="NCBIfam" id="NF002632">
    <property type="entry name" value="PRK02304.1-1"/>
    <property type="match status" value="1"/>
</dbReference>
<dbReference type="NCBIfam" id="NF002633">
    <property type="entry name" value="PRK02304.1-2"/>
    <property type="match status" value="1"/>
</dbReference>
<dbReference type="NCBIfam" id="NF002634">
    <property type="entry name" value="PRK02304.1-3"/>
    <property type="match status" value="1"/>
</dbReference>
<dbReference type="NCBIfam" id="NF002636">
    <property type="entry name" value="PRK02304.1-5"/>
    <property type="match status" value="1"/>
</dbReference>
<dbReference type="PANTHER" id="PTHR32315">
    <property type="entry name" value="ADENINE PHOSPHORIBOSYLTRANSFERASE"/>
    <property type="match status" value="1"/>
</dbReference>
<dbReference type="PANTHER" id="PTHR32315:SF3">
    <property type="entry name" value="ADENINE PHOSPHORIBOSYLTRANSFERASE"/>
    <property type="match status" value="1"/>
</dbReference>
<dbReference type="Pfam" id="PF00156">
    <property type="entry name" value="Pribosyltran"/>
    <property type="match status" value="1"/>
</dbReference>
<dbReference type="SUPFAM" id="SSF53271">
    <property type="entry name" value="PRTase-like"/>
    <property type="match status" value="1"/>
</dbReference>
<dbReference type="PROSITE" id="PS00103">
    <property type="entry name" value="PUR_PYR_PR_TRANSFER"/>
    <property type="match status" value="1"/>
</dbReference>
<proteinExistence type="inferred from homology"/>
<feature type="chain" id="PRO_1000116243" description="Adenine phosphoribosyltransferase">
    <location>
        <begin position="1"/>
        <end position="183"/>
    </location>
</feature>
<reference key="1">
    <citation type="journal article" date="2009" name="PLoS Genet.">
        <title>Organised genome dynamics in the Escherichia coli species results in highly diverse adaptive paths.</title>
        <authorList>
            <person name="Touchon M."/>
            <person name="Hoede C."/>
            <person name="Tenaillon O."/>
            <person name="Barbe V."/>
            <person name="Baeriswyl S."/>
            <person name="Bidet P."/>
            <person name="Bingen E."/>
            <person name="Bonacorsi S."/>
            <person name="Bouchier C."/>
            <person name="Bouvet O."/>
            <person name="Calteau A."/>
            <person name="Chiapello H."/>
            <person name="Clermont O."/>
            <person name="Cruveiller S."/>
            <person name="Danchin A."/>
            <person name="Diard M."/>
            <person name="Dossat C."/>
            <person name="Karoui M.E."/>
            <person name="Frapy E."/>
            <person name="Garry L."/>
            <person name="Ghigo J.M."/>
            <person name="Gilles A.M."/>
            <person name="Johnson J."/>
            <person name="Le Bouguenec C."/>
            <person name="Lescat M."/>
            <person name="Mangenot S."/>
            <person name="Martinez-Jehanne V."/>
            <person name="Matic I."/>
            <person name="Nassif X."/>
            <person name="Oztas S."/>
            <person name="Petit M.A."/>
            <person name="Pichon C."/>
            <person name="Rouy Z."/>
            <person name="Ruf C.S."/>
            <person name="Schneider D."/>
            <person name="Tourret J."/>
            <person name="Vacherie B."/>
            <person name="Vallenet D."/>
            <person name="Medigue C."/>
            <person name="Rocha E.P.C."/>
            <person name="Denamur E."/>
        </authorList>
    </citation>
    <scope>NUCLEOTIDE SEQUENCE [LARGE SCALE GENOMIC DNA]</scope>
    <source>
        <strain>ED1a</strain>
    </source>
</reference>
<sequence>MTATAQQLEYLKNSIKSIQDYPKPGILFRDVTSLLEDPKAYALSIDLLVERYKNAGITKVVGTEARGFLFGAPVALGLGVGFVPVRKPGKLPRETISETYDLEYGTDQLEIHVDAIKPGDKVLVVDDLLATGGTIEATVKLIRRLGGEVADAAFIINLFDLGGEQRLEKQGITSYSLVPFPGH</sequence>